<gene>
    <name evidence="1" type="primary">minC</name>
    <name type="ordered locus">STM1814</name>
</gene>
<organism>
    <name type="scientific">Salmonella typhimurium (strain LT2 / SGSC1412 / ATCC 700720)</name>
    <dbReference type="NCBI Taxonomy" id="99287"/>
    <lineage>
        <taxon>Bacteria</taxon>
        <taxon>Pseudomonadati</taxon>
        <taxon>Pseudomonadota</taxon>
        <taxon>Gammaproteobacteria</taxon>
        <taxon>Enterobacterales</taxon>
        <taxon>Enterobacteriaceae</taxon>
        <taxon>Salmonella</taxon>
    </lineage>
</organism>
<reference key="1">
    <citation type="journal article" date="2001" name="Nature">
        <title>Complete genome sequence of Salmonella enterica serovar Typhimurium LT2.</title>
        <authorList>
            <person name="McClelland M."/>
            <person name="Sanderson K.E."/>
            <person name="Spieth J."/>
            <person name="Clifton S.W."/>
            <person name="Latreille P."/>
            <person name="Courtney L."/>
            <person name="Porwollik S."/>
            <person name="Ali J."/>
            <person name="Dante M."/>
            <person name="Du F."/>
            <person name="Hou S."/>
            <person name="Layman D."/>
            <person name="Leonard S."/>
            <person name="Nguyen C."/>
            <person name="Scott K."/>
            <person name="Holmes A."/>
            <person name="Grewal N."/>
            <person name="Mulvaney E."/>
            <person name="Ryan E."/>
            <person name="Sun H."/>
            <person name="Florea L."/>
            <person name="Miller W."/>
            <person name="Stoneking T."/>
            <person name="Nhan M."/>
            <person name="Waterston R."/>
            <person name="Wilson R.K."/>
        </authorList>
    </citation>
    <scope>NUCLEOTIDE SEQUENCE [LARGE SCALE GENOMIC DNA]</scope>
    <source>
        <strain>LT2 / SGSC1412 / ATCC 700720</strain>
    </source>
</reference>
<sequence>MSNTPIELKGSSFTLSVVHLHEAEPEVIRQALEDKIAQAPAFLKHAPVVINVSGLESPVNWPELHKIVTSTGLRIIGVSGCKDASLKVEIDRMGLPLLTEGKEKAVRPAPVEPATPSEPPQNANPITKTRLIDVPVRSGQRIYAPQCDLIVTSHVSAGAELIADGNIHVYGMMRGRALAGASGDREAQIFCTHLTAELVSIAGVYWLSDKIPAEFYGKAARLRLADNALTVQPLN</sequence>
<keyword id="KW-0002">3D-structure</keyword>
<keyword id="KW-0131">Cell cycle</keyword>
<keyword id="KW-0132">Cell division</keyword>
<keyword id="KW-1185">Reference proteome</keyword>
<keyword id="KW-0717">Septation</keyword>
<feature type="chain" id="PRO_0000189060" description="Septum site-determining protein MinC">
    <location>
        <begin position="1"/>
        <end position="235"/>
    </location>
</feature>
<feature type="region of interest" description="Disordered" evidence="2">
    <location>
        <begin position="104"/>
        <end position="125"/>
    </location>
</feature>
<feature type="compositionally biased region" description="Pro residues" evidence="2">
    <location>
        <begin position="110"/>
        <end position="119"/>
    </location>
</feature>
<feature type="strand" evidence="3">
    <location>
        <begin position="16"/>
        <end position="22"/>
    </location>
</feature>
<feature type="helix" evidence="3">
    <location>
        <begin position="25"/>
        <end position="38"/>
    </location>
</feature>
<feature type="helix" evidence="3">
    <location>
        <begin position="40"/>
        <end position="43"/>
    </location>
</feature>
<feature type="strand" evidence="3">
    <location>
        <begin position="47"/>
        <end position="54"/>
    </location>
</feature>
<feature type="helix" evidence="3">
    <location>
        <begin position="61"/>
        <end position="69"/>
    </location>
</feature>
<feature type="turn" evidence="3">
    <location>
        <begin position="70"/>
        <end position="72"/>
    </location>
</feature>
<feature type="strand" evidence="3">
    <location>
        <begin position="74"/>
        <end position="80"/>
    </location>
</feature>
<feature type="helix" evidence="3">
    <location>
        <begin position="84"/>
        <end position="92"/>
    </location>
</feature>
<protein>
    <recommendedName>
        <fullName>Septum site-determining protein MinC</fullName>
    </recommendedName>
</protein>
<accession>P65359</accession>
<accession>Q8XEJ9</accession>
<evidence type="ECO:0000255" key="1">
    <source>
        <dbReference type="HAMAP-Rule" id="MF_00267"/>
    </source>
</evidence>
<evidence type="ECO:0000256" key="2">
    <source>
        <dbReference type="SAM" id="MobiDB-lite"/>
    </source>
</evidence>
<evidence type="ECO:0007829" key="3">
    <source>
        <dbReference type="PDB" id="3GHF"/>
    </source>
</evidence>
<comment type="function">
    <text evidence="1">Cell division inhibitor that blocks the formation of polar Z ring septums. Rapidly oscillates between the poles of the cell to destabilize FtsZ filaments that have formed before they mature into polar Z rings. Prevents FtsZ polymerization.</text>
</comment>
<comment type="subunit">
    <text evidence="1">Interacts with MinD and FtsZ.</text>
</comment>
<comment type="similarity">
    <text evidence="1">Belongs to the MinC family.</text>
</comment>
<proteinExistence type="evidence at protein level"/>
<dbReference type="EMBL" id="AE006468">
    <property type="protein sequence ID" value="AAL20729.1"/>
    <property type="molecule type" value="Genomic_DNA"/>
</dbReference>
<dbReference type="RefSeq" id="NP_460770.1">
    <property type="nucleotide sequence ID" value="NC_003197.2"/>
</dbReference>
<dbReference type="RefSeq" id="WP_000072527.1">
    <property type="nucleotide sequence ID" value="NC_003197.2"/>
</dbReference>
<dbReference type="PDB" id="3GHF">
    <property type="method" value="X-ray"/>
    <property type="resolution" value="2.20 A"/>
    <property type="chains" value="A=2-110"/>
</dbReference>
<dbReference type="PDBsum" id="3GHF"/>
<dbReference type="SMR" id="P65359"/>
<dbReference type="STRING" id="99287.STM1814"/>
<dbReference type="PaxDb" id="99287-STM1814"/>
<dbReference type="GeneID" id="1253333"/>
<dbReference type="KEGG" id="stm:STM1814"/>
<dbReference type="PATRIC" id="fig|99287.12.peg.1914"/>
<dbReference type="HOGENOM" id="CLU_067812_0_1_6"/>
<dbReference type="OMA" id="RRDPLWG"/>
<dbReference type="PhylomeDB" id="P65359"/>
<dbReference type="BioCyc" id="SENT99287:STM1814-MONOMER"/>
<dbReference type="EvolutionaryTrace" id="P65359"/>
<dbReference type="Proteomes" id="UP000001014">
    <property type="component" value="Chromosome"/>
</dbReference>
<dbReference type="GO" id="GO:0000902">
    <property type="term" value="P:cell morphogenesis"/>
    <property type="evidence" value="ECO:0007669"/>
    <property type="project" value="InterPro"/>
</dbReference>
<dbReference type="GO" id="GO:0000917">
    <property type="term" value="P:division septum assembly"/>
    <property type="evidence" value="ECO:0007669"/>
    <property type="project" value="UniProtKB-KW"/>
</dbReference>
<dbReference type="GO" id="GO:0051302">
    <property type="term" value="P:regulation of cell division"/>
    <property type="evidence" value="ECO:0007669"/>
    <property type="project" value="InterPro"/>
</dbReference>
<dbReference type="GO" id="GO:1901891">
    <property type="term" value="P:regulation of cell septum assembly"/>
    <property type="evidence" value="ECO:0007669"/>
    <property type="project" value="InterPro"/>
</dbReference>
<dbReference type="FunFam" id="2.160.20.70:FF:000002">
    <property type="entry name" value="Probable septum site-determining protein MinC"/>
    <property type="match status" value="1"/>
</dbReference>
<dbReference type="Gene3D" id="2.160.20.70">
    <property type="match status" value="1"/>
</dbReference>
<dbReference type="Gene3D" id="3.30.70.260">
    <property type="match status" value="1"/>
</dbReference>
<dbReference type="HAMAP" id="MF_00267">
    <property type="entry name" value="MinC"/>
    <property type="match status" value="1"/>
</dbReference>
<dbReference type="InterPro" id="IPR016098">
    <property type="entry name" value="CAP/MinC_C"/>
</dbReference>
<dbReference type="InterPro" id="IPR013033">
    <property type="entry name" value="MinC"/>
</dbReference>
<dbReference type="InterPro" id="IPR036145">
    <property type="entry name" value="MinC_C_sf"/>
</dbReference>
<dbReference type="InterPro" id="IPR007874">
    <property type="entry name" value="MinC_N"/>
</dbReference>
<dbReference type="InterPro" id="IPR005526">
    <property type="entry name" value="Septum_form_inhib_MinC_C"/>
</dbReference>
<dbReference type="NCBIfam" id="TIGR01222">
    <property type="entry name" value="minC"/>
    <property type="match status" value="1"/>
</dbReference>
<dbReference type="PANTHER" id="PTHR34108">
    <property type="entry name" value="SEPTUM SITE-DETERMINING PROTEIN MINC"/>
    <property type="match status" value="1"/>
</dbReference>
<dbReference type="PANTHER" id="PTHR34108:SF1">
    <property type="entry name" value="SEPTUM SITE-DETERMINING PROTEIN MINC"/>
    <property type="match status" value="1"/>
</dbReference>
<dbReference type="Pfam" id="PF03775">
    <property type="entry name" value="MinC_C"/>
    <property type="match status" value="1"/>
</dbReference>
<dbReference type="Pfam" id="PF05209">
    <property type="entry name" value="MinC_N"/>
    <property type="match status" value="1"/>
</dbReference>
<dbReference type="SUPFAM" id="SSF63848">
    <property type="entry name" value="Cell-division inhibitor MinC, C-terminal domain"/>
    <property type="match status" value="1"/>
</dbReference>
<name>MINC_SALTY</name>